<name>PRR12_HUMAN</name>
<accession>Q9ULL5</accession>
<accession>E9PB06</accession>
<accession>Q8N4J6</accession>
<protein>
    <recommendedName>
        <fullName>Proline-rich protein 12</fullName>
    </recommendedName>
</protein>
<dbReference type="EMBL" id="AB033031">
    <property type="protein sequence ID" value="BAA86519.1"/>
    <property type="status" value="ALT_SEQ"/>
    <property type="molecule type" value="mRNA"/>
</dbReference>
<dbReference type="EMBL" id="AC010619">
    <property type="status" value="NOT_ANNOTATED_CDS"/>
    <property type="molecule type" value="Genomic_DNA"/>
</dbReference>
<dbReference type="EMBL" id="AC011495">
    <property type="status" value="NOT_ANNOTATED_CDS"/>
    <property type="molecule type" value="Genomic_DNA"/>
</dbReference>
<dbReference type="EMBL" id="BC034003">
    <property type="protein sequence ID" value="AAH34003.1"/>
    <property type="molecule type" value="mRNA"/>
</dbReference>
<dbReference type="CCDS" id="CCDS46143.1">
    <molecule id="Q9ULL5-3"/>
</dbReference>
<dbReference type="RefSeq" id="NP_065770.1">
    <molecule id="Q9ULL5-3"/>
    <property type="nucleotide sequence ID" value="NM_020719.3"/>
</dbReference>
<dbReference type="BioGRID" id="121549">
    <property type="interactions" value="90"/>
</dbReference>
<dbReference type="FunCoup" id="Q9ULL5">
    <property type="interactions" value="984"/>
</dbReference>
<dbReference type="IntAct" id="Q9ULL5">
    <property type="interactions" value="57"/>
</dbReference>
<dbReference type="MINT" id="Q9ULL5"/>
<dbReference type="STRING" id="9606.ENSP00000394510"/>
<dbReference type="GlyCosmos" id="Q9ULL5">
    <property type="glycosylation" value="1 site, 1 glycan"/>
</dbReference>
<dbReference type="GlyGen" id="Q9ULL5">
    <property type="glycosylation" value="10 sites, 1 O-linked glycan (5 sites)"/>
</dbReference>
<dbReference type="iPTMnet" id="Q9ULL5"/>
<dbReference type="PhosphoSitePlus" id="Q9ULL5"/>
<dbReference type="BioMuta" id="PRR12"/>
<dbReference type="DMDM" id="109892840"/>
<dbReference type="jPOST" id="Q9ULL5"/>
<dbReference type="MassIVE" id="Q9ULL5"/>
<dbReference type="PaxDb" id="9606-ENSP00000394510"/>
<dbReference type="PeptideAtlas" id="Q9ULL5"/>
<dbReference type="ProteomicsDB" id="85071">
    <molecule id="Q9ULL5-2"/>
</dbReference>
<dbReference type="ProteomicsDB" id="85072">
    <molecule id="Q9ULL5-3"/>
</dbReference>
<dbReference type="Pumba" id="Q9ULL5"/>
<dbReference type="Antibodypedia" id="32065">
    <property type="antibodies" value="12 antibodies from 9 providers"/>
</dbReference>
<dbReference type="Ensembl" id="ENST00000418929.7">
    <molecule id="Q9ULL5-3"/>
    <property type="protein sequence ID" value="ENSP00000394510.1"/>
    <property type="gene ID" value="ENSG00000126464.15"/>
</dbReference>
<dbReference type="GeneID" id="57479"/>
<dbReference type="KEGG" id="hsa:57479"/>
<dbReference type="MANE-Select" id="ENST00000418929.7">
    <property type="protein sequence ID" value="ENSP00000394510.1"/>
    <property type="RefSeq nucleotide sequence ID" value="NM_020719.3"/>
    <property type="RefSeq protein sequence ID" value="NP_065770.1"/>
</dbReference>
<dbReference type="UCSC" id="uc002poo.5">
    <molecule id="Q9ULL5-3"/>
    <property type="organism name" value="human"/>
</dbReference>
<dbReference type="AGR" id="HGNC:29217"/>
<dbReference type="CTD" id="57479"/>
<dbReference type="DisGeNET" id="57479"/>
<dbReference type="GeneCards" id="PRR12"/>
<dbReference type="HGNC" id="HGNC:29217">
    <property type="gene designation" value="PRR12"/>
</dbReference>
<dbReference type="HPA" id="ENSG00000126464">
    <property type="expression patterns" value="Low tissue specificity"/>
</dbReference>
<dbReference type="MalaCards" id="PRR12"/>
<dbReference type="MIM" id="616633">
    <property type="type" value="gene"/>
</dbReference>
<dbReference type="MIM" id="619539">
    <property type="type" value="phenotype"/>
</dbReference>
<dbReference type="neXtProt" id="NX_Q9ULL5"/>
<dbReference type="OpenTargets" id="ENSG00000126464"/>
<dbReference type="Orphanet" id="659904">
    <property type="disease" value="Multiple congenital anomalies-neurodevelopmental delay-ocular abnormalities syndrome"/>
</dbReference>
<dbReference type="PharmGKB" id="PA134903328"/>
<dbReference type="VEuPathDB" id="HostDB:ENSG00000126464"/>
<dbReference type="eggNOG" id="KOG4805">
    <property type="taxonomic scope" value="Eukaryota"/>
</dbReference>
<dbReference type="GeneTree" id="ENSGT00440000037417"/>
<dbReference type="HOGENOM" id="CLU_000708_0_0_1"/>
<dbReference type="InParanoid" id="Q9ULL5"/>
<dbReference type="OMA" id="FPEMEDM"/>
<dbReference type="OrthoDB" id="21499at2759"/>
<dbReference type="PAN-GO" id="Q9ULL5">
    <property type="GO annotations" value="0 GO annotations based on evolutionary models"/>
</dbReference>
<dbReference type="PhylomeDB" id="Q9ULL5"/>
<dbReference type="TreeFam" id="TF333141"/>
<dbReference type="PathwayCommons" id="Q9ULL5"/>
<dbReference type="SignaLink" id="Q9ULL5"/>
<dbReference type="BioGRID-ORCS" id="57479">
    <property type="hits" value="60 hits in 1163 CRISPR screens"/>
</dbReference>
<dbReference type="ChiTaRS" id="PRR12">
    <property type="organism name" value="human"/>
</dbReference>
<dbReference type="GenomeRNAi" id="57479"/>
<dbReference type="Pharos" id="Q9ULL5">
    <property type="development level" value="Tdark"/>
</dbReference>
<dbReference type="PRO" id="PR:Q9ULL5"/>
<dbReference type="Proteomes" id="UP000005640">
    <property type="component" value="Chromosome 19"/>
</dbReference>
<dbReference type="RNAct" id="Q9ULL5">
    <property type="molecule type" value="protein"/>
</dbReference>
<dbReference type="Bgee" id="ENSG00000126464">
    <property type="expression patterns" value="Expressed in cardia of stomach and 151 other cell types or tissues"/>
</dbReference>
<dbReference type="ExpressionAtlas" id="Q9ULL5">
    <property type="expression patterns" value="baseline and differential"/>
</dbReference>
<dbReference type="GO" id="GO:0043005">
    <property type="term" value="C:neuron projection"/>
    <property type="evidence" value="ECO:0007669"/>
    <property type="project" value="UniProtKB-KW"/>
</dbReference>
<dbReference type="GO" id="GO:0005634">
    <property type="term" value="C:nucleus"/>
    <property type="evidence" value="ECO:0007669"/>
    <property type="project" value="UniProtKB-SubCell"/>
</dbReference>
<dbReference type="GO" id="GO:0014069">
    <property type="term" value="C:postsynaptic density"/>
    <property type="evidence" value="ECO:0007669"/>
    <property type="project" value="UniProtKB-SubCell"/>
</dbReference>
<dbReference type="InterPro" id="IPR052466">
    <property type="entry name" value="DNA_MethProtect_Complex"/>
</dbReference>
<dbReference type="InterPro" id="IPR025451">
    <property type="entry name" value="DUF4211"/>
</dbReference>
<dbReference type="PANTHER" id="PTHR14709">
    <property type="entry name" value="GLUTAMINE AND SERINE-RICH PROTEIN 1-RELATED"/>
    <property type="match status" value="1"/>
</dbReference>
<dbReference type="PANTHER" id="PTHR14709:SF1">
    <property type="entry name" value="PROLINE-RICH PROTEIN 12"/>
    <property type="match status" value="1"/>
</dbReference>
<dbReference type="Pfam" id="PF13926">
    <property type="entry name" value="DUF4211"/>
    <property type="match status" value="1"/>
</dbReference>
<reference key="1">
    <citation type="journal article" date="2004" name="Nature">
        <title>The DNA sequence and biology of human chromosome 19.</title>
        <authorList>
            <person name="Grimwood J."/>
            <person name="Gordon L.A."/>
            <person name="Olsen A.S."/>
            <person name="Terry A."/>
            <person name="Schmutz J."/>
            <person name="Lamerdin J.E."/>
            <person name="Hellsten U."/>
            <person name="Goodstein D."/>
            <person name="Couronne O."/>
            <person name="Tran-Gyamfi M."/>
            <person name="Aerts A."/>
            <person name="Altherr M."/>
            <person name="Ashworth L."/>
            <person name="Bajorek E."/>
            <person name="Black S."/>
            <person name="Branscomb E."/>
            <person name="Caenepeel S."/>
            <person name="Carrano A.V."/>
            <person name="Caoile C."/>
            <person name="Chan Y.M."/>
            <person name="Christensen M."/>
            <person name="Cleland C.A."/>
            <person name="Copeland A."/>
            <person name="Dalin E."/>
            <person name="Dehal P."/>
            <person name="Denys M."/>
            <person name="Detter J.C."/>
            <person name="Escobar J."/>
            <person name="Flowers D."/>
            <person name="Fotopulos D."/>
            <person name="Garcia C."/>
            <person name="Georgescu A.M."/>
            <person name="Glavina T."/>
            <person name="Gomez M."/>
            <person name="Gonzales E."/>
            <person name="Groza M."/>
            <person name="Hammon N."/>
            <person name="Hawkins T."/>
            <person name="Haydu L."/>
            <person name="Ho I."/>
            <person name="Huang W."/>
            <person name="Israni S."/>
            <person name="Jett J."/>
            <person name="Kadner K."/>
            <person name="Kimball H."/>
            <person name="Kobayashi A."/>
            <person name="Larionov V."/>
            <person name="Leem S.-H."/>
            <person name="Lopez F."/>
            <person name="Lou Y."/>
            <person name="Lowry S."/>
            <person name="Malfatti S."/>
            <person name="Martinez D."/>
            <person name="McCready P.M."/>
            <person name="Medina C."/>
            <person name="Morgan J."/>
            <person name="Nelson K."/>
            <person name="Nolan M."/>
            <person name="Ovcharenko I."/>
            <person name="Pitluck S."/>
            <person name="Pollard M."/>
            <person name="Popkie A.P."/>
            <person name="Predki P."/>
            <person name="Quan G."/>
            <person name="Ramirez L."/>
            <person name="Rash S."/>
            <person name="Retterer J."/>
            <person name="Rodriguez A."/>
            <person name="Rogers S."/>
            <person name="Salamov A."/>
            <person name="Salazar A."/>
            <person name="She X."/>
            <person name="Smith D."/>
            <person name="Slezak T."/>
            <person name="Solovyev V."/>
            <person name="Thayer N."/>
            <person name="Tice H."/>
            <person name="Tsai M."/>
            <person name="Ustaszewska A."/>
            <person name="Vo N."/>
            <person name="Wagner M."/>
            <person name="Wheeler J."/>
            <person name="Wu K."/>
            <person name="Xie G."/>
            <person name="Yang J."/>
            <person name="Dubchak I."/>
            <person name="Furey T.S."/>
            <person name="DeJong P."/>
            <person name="Dickson M."/>
            <person name="Gordon D."/>
            <person name="Eichler E.E."/>
            <person name="Pennacchio L.A."/>
            <person name="Richardson P."/>
            <person name="Stubbs L."/>
            <person name="Rokhsar D.S."/>
            <person name="Myers R.M."/>
            <person name="Rubin E.M."/>
            <person name="Lucas S.M."/>
        </authorList>
    </citation>
    <scope>NUCLEOTIDE SEQUENCE [LARGE SCALE GENOMIC DNA]</scope>
</reference>
<reference key="2">
    <citation type="journal article" date="1999" name="DNA Res.">
        <title>Prediction of the coding sequences of unidentified human genes. XV. The complete sequences of 100 new cDNA clones from brain which code for large proteins in vitro.</title>
        <authorList>
            <person name="Nagase T."/>
            <person name="Ishikawa K."/>
            <person name="Kikuno R."/>
            <person name="Hirosawa M."/>
            <person name="Nomura N."/>
            <person name="Ohara O."/>
        </authorList>
    </citation>
    <scope>NUCLEOTIDE SEQUENCE [LARGE SCALE MRNA] OF 838-2036 (ISOFORM 1)</scope>
    <source>
        <tissue>Brain</tissue>
    </source>
</reference>
<reference key="3">
    <citation type="journal article" date="2004" name="Genome Res.">
        <title>The status, quality, and expansion of the NIH full-length cDNA project: the Mammalian Gene Collection (MGC).</title>
        <authorList>
            <consortium name="The MGC Project Team"/>
        </authorList>
    </citation>
    <scope>NUCLEOTIDE SEQUENCE [LARGE SCALE MRNA] OF 1365-2036 (ISOFORM 2)</scope>
    <source>
        <tissue>Pancreas</tissue>
    </source>
</reference>
<reference key="4">
    <citation type="journal article" date="2006" name="Cell">
        <title>Global, in vivo, and site-specific phosphorylation dynamics in signaling networks.</title>
        <authorList>
            <person name="Olsen J.V."/>
            <person name="Blagoev B."/>
            <person name="Gnad F."/>
            <person name="Macek B."/>
            <person name="Kumar C."/>
            <person name="Mortensen P."/>
            <person name="Mann M."/>
        </authorList>
    </citation>
    <scope>PHOSPHORYLATION [LARGE SCALE ANALYSIS] AT SER-1308; THR-1561 AND SER-1568</scope>
    <scope>IDENTIFICATION BY MASS SPECTROMETRY [LARGE SCALE ANALYSIS]</scope>
    <source>
        <tissue>Cervix carcinoma</tissue>
    </source>
</reference>
<reference key="5">
    <citation type="journal article" date="2008" name="J. Proteome Res.">
        <title>Combining protein-based IMAC, peptide-based IMAC, and MudPIT for efficient phosphoproteomic analysis.</title>
        <authorList>
            <person name="Cantin G.T."/>
            <person name="Yi W."/>
            <person name="Lu B."/>
            <person name="Park S.K."/>
            <person name="Xu T."/>
            <person name="Lee J.-D."/>
            <person name="Yates J.R. III"/>
        </authorList>
    </citation>
    <scope>PHOSPHORYLATION [LARGE SCALE ANALYSIS] AT SER-865 AND SER-1925</scope>
    <scope>IDENTIFICATION BY MASS SPECTROMETRY [LARGE SCALE ANALYSIS]</scope>
    <source>
        <tissue>Cervix carcinoma</tissue>
    </source>
</reference>
<reference key="6">
    <citation type="journal article" date="2008" name="Proc. Natl. Acad. Sci. U.S.A.">
        <title>A quantitative atlas of mitotic phosphorylation.</title>
        <authorList>
            <person name="Dephoure N."/>
            <person name="Zhou C."/>
            <person name="Villen J."/>
            <person name="Beausoleil S.A."/>
            <person name="Bakalarski C.E."/>
            <person name="Elledge S.J."/>
            <person name="Gygi S.P."/>
        </authorList>
    </citation>
    <scope>PHOSPHORYLATION [LARGE SCALE ANALYSIS] AT SER-1077; THR-1304; SER-1308; SER-1381; SER-1382; THR-1561 AND SER-1568</scope>
    <scope>IDENTIFICATION BY MASS SPECTROMETRY [LARGE SCALE ANALYSIS]</scope>
    <source>
        <tissue>Cervix carcinoma</tissue>
    </source>
</reference>
<reference key="7">
    <citation type="journal article" date="2009" name="Anal. Chem.">
        <title>Lys-N and trypsin cover complementary parts of the phosphoproteome in a refined SCX-based approach.</title>
        <authorList>
            <person name="Gauci S."/>
            <person name="Helbig A.O."/>
            <person name="Slijper M."/>
            <person name="Krijgsveld J."/>
            <person name="Heck A.J."/>
            <person name="Mohammed S."/>
        </authorList>
    </citation>
    <scope>IDENTIFICATION BY MASS SPECTROMETRY [LARGE SCALE ANALYSIS]</scope>
</reference>
<reference key="8">
    <citation type="journal article" date="2009" name="Sci. Signal.">
        <title>Quantitative phosphoproteomic analysis of T cell receptor signaling reveals system-wide modulation of protein-protein interactions.</title>
        <authorList>
            <person name="Mayya V."/>
            <person name="Lundgren D.H."/>
            <person name="Hwang S.-I."/>
            <person name="Rezaul K."/>
            <person name="Wu L."/>
            <person name="Eng J.K."/>
            <person name="Rodionov V."/>
            <person name="Han D.K."/>
        </authorList>
    </citation>
    <scope>PHOSPHORYLATION [LARGE SCALE ANALYSIS] AT SER-1381 AND SER-1382</scope>
    <scope>IDENTIFICATION BY MASS SPECTROMETRY [LARGE SCALE ANALYSIS]</scope>
    <source>
        <tissue>Leukemic T-cell</tissue>
    </source>
</reference>
<reference key="9">
    <citation type="journal article" date="2009" name="Science">
        <title>Lysine acetylation targets protein complexes and co-regulates major cellular functions.</title>
        <authorList>
            <person name="Choudhary C."/>
            <person name="Kumar C."/>
            <person name="Gnad F."/>
            <person name="Nielsen M.L."/>
            <person name="Rehman M."/>
            <person name="Walther T.C."/>
            <person name="Olsen J.V."/>
            <person name="Mann M."/>
        </authorList>
    </citation>
    <scope>ACETYLATION [LARGE SCALE ANALYSIS] AT LYS-1223</scope>
    <scope>IDENTIFICATION BY MASS SPECTROMETRY [LARGE SCALE ANALYSIS]</scope>
</reference>
<reference key="10">
    <citation type="journal article" date="2010" name="Sci. Signal.">
        <title>Quantitative phosphoproteomics reveals widespread full phosphorylation site occupancy during mitosis.</title>
        <authorList>
            <person name="Olsen J.V."/>
            <person name="Vermeulen M."/>
            <person name="Santamaria A."/>
            <person name="Kumar C."/>
            <person name="Miller M.L."/>
            <person name="Jensen L.J."/>
            <person name="Gnad F."/>
            <person name="Cox J."/>
            <person name="Jensen T.S."/>
            <person name="Nigg E.A."/>
            <person name="Brunak S."/>
            <person name="Mann M."/>
        </authorList>
    </citation>
    <scope>PHOSPHORYLATION [LARGE SCALE ANALYSIS] AT SER-651; THR-738; SER-865; THR-1304; SER-1308; SER-1381; SER-1382; SER-1387 AND SER-1925</scope>
    <scope>IDENTIFICATION BY MASS SPECTROMETRY [LARGE SCALE ANALYSIS]</scope>
    <source>
        <tissue>Cervix carcinoma</tissue>
    </source>
</reference>
<reference key="11">
    <citation type="journal article" date="2011" name="Sci. Signal.">
        <title>System-wide temporal characterization of the proteome and phosphoproteome of human embryonic stem cell differentiation.</title>
        <authorList>
            <person name="Rigbolt K.T."/>
            <person name="Prokhorova T.A."/>
            <person name="Akimov V."/>
            <person name="Henningsen J."/>
            <person name="Johansen P.T."/>
            <person name="Kratchmarova I."/>
            <person name="Kassem M."/>
            <person name="Mann M."/>
            <person name="Olsen J.V."/>
            <person name="Blagoev B."/>
        </authorList>
    </citation>
    <scope>PHOSPHORYLATION [LARGE SCALE ANALYSIS] AT SER-651; SER-1381; SER-1382 AND SER-1387</scope>
    <scope>IDENTIFICATION BY MASS SPECTROMETRY [LARGE SCALE ANALYSIS]</scope>
</reference>
<reference key="12">
    <citation type="journal article" date="2013" name="J. Proteome Res.">
        <title>Toward a comprehensive characterization of a human cancer cell phosphoproteome.</title>
        <authorList>
            <person name="Zhou H."/>
            <person name="Di Palma S."/>
            <person name="Preisinger C."/>
            <person name="Peng M."/>
            <person name="Polat A.N."/>
            <person name="Heck A.J."/>
            <person name="Mohammed S."/>
        </authorList>
    </citation>
    <scope>PHOSPHORYLATION [LARGE SCALE ANALYSIS] AT SER-865; SER-1077; SER-1308; SER-1381; SER-1382 AND THR-1705</scope>
    <scope>IDENTIFICATION BY MASS SPECTROMETRY [LARGE SCALE ANALYSIS]</scope>
    <source>
        <tissue>Cervix carcinoma</tissue>
        <tissue>Erythroleukemia</tissue>
    </source>
</reference>
<reference key="13">
    <citation type="journal article" date="2014" name="J. Proteomics">
        <title>An enzyme assisted RP-RPLC approach for in-depth analysis of human liver phosphoproteome.</title>
        <authorList>
            <person name="Bian Y."/>
            <person name="Song C."/>
            <person name="Cheng K."/>
            <person name="Dong M."/>
            <person name="Wang F."/>
            <person name="Huang J."/>
            <person name="Sun D."/>
            <person name="Wang L."/>
            <person name="Ye M."/>
            <person name="Zou H."/>
        </authorList>
    </citation>
    <scope>PHOSPHORYLATION [LARGE SCALE ANALYSIS] AT SER-1308</scope>
    <scope>IDENTIFICATION BY MASS SPECTROMETRY [LARGE SCALE ANALYSIS]</scope>
    <source>
        <tissue>Liver</tissue>
    </source>
</reference>
<reference key="14">
    <citation type="journal article" date="2018" name="Hum. Genet.">
        <title>De novo apparent loss-of-function mutations in PRR12 in three patients with intellectual disability and iris abnormalities.</title>
        <authorList>
            <person name="Leduc M.S."/>
            <person name="Mcguire M."/>
            <person name="Madan-Khetarpal S."/>
            <person name="Ortiz D."/>
            <person name="Hayflick S."/>
            <person name="Keller K."/>
            <person name="Eng C.M."/>
            <person name="Yang Y."/>
            <person name="Bi W."/>
        </authorList>
    </citation>
    <scope>INVOLVEMENT IN NOC1</scope>
    <scope>VARIANT NOC1 640-GLU--GLY-2036 DEL</scope>
</reference>
<reference key="15">
    <citation type="journal article" date="2021" name="Clin. Genet.">
        <title>Dominant variants in PRR12 result in unilateral or bilateral complex microphthalmia.</title>
        <authorList>
            <person name="Reis L.M."/>
            <person name="Costakos D."/>
            <person name="Wheeler P.G."/>
            <person name="Bardakjian T."/>
            <person name="Schneider A."/>
            <person name="Fung S.S.M."/>
            <person name="Semina E.V."/>
        </authorList>
    </citation>
    <scope>INVOLVEMENT IN NOC1</scope>
</reference>
<reference key="16">
    <citation type="journal article" date="2021" name="Genet. Med.">
        <title>Haploinsufficiency of PRR12 causes a spectrum of neurodevelopmental, eye, and multisystem abnormalities.</title>
        <authorList>
            <person name="Chowdhury F."/>
            <person name="Wang L."/>
            <person name="Al-Raqad M."/>
            <person name="Amor D.J."/>
            <person name="Baxova A."/>
            <person name="Bendova S."/>
            <person name="Biamino E."/>
            <person name="Brusco A."/>
            <person name="Caluseriu O."/>
            <person name="Cox N.J."/>
            <person name="Froukh T."/>
            <person name="Gunay-Aygun M."/>
            <person name="Hancarova M."/>
            <person name="Haynes D."/>
            <person name="Heide S."/>
            <person name="Hoganson G."/>
            <person name="Kaname T."/>
            <person name="Keren B."/>
            <person name="Kosaki K."/>
            <person name="Kubota K."/>
            <person name="Lemons J.M."/>
            <person name="Magrina M.A."/>
            <person name="Mark P.R."/>
            <person name="McDonald M.T."/>
            <person name="Montgomery S."/>
            <person name="Morley G.M."/>
            <person name="Ohnishi H."/>
            <person name="Okamoto N."/>
            <person name="Rodriguez-Buritica D."/>
            <person name="Rump P."/>
            <person name="Sedlacek Z."/>
            <person name="Schatz K."/>
            <person name="Streff H."/>
            <person name="Uehara T."/>
            <person name="Walia J.S."/>
            <person name="Wheeler P.G."/>
            <person name="Wiesener A."/>
            <person name="Zweier C."/>
            <person name="Kawakami K."/>
            <person name="Wentzensen I.M."/>
            <person name="Lalani S.R."/>
            <person name="Siu V.M."/>
            <person name="Bi W."/>
            <person name="Balci T.B."/>
        </authorList>
    </citation>
    <scope>INVOLVEMENT IN NOC1</scope>
    <scope>VARIANTS NOC1 264-GLN--GLY-2036 DEL; 411-SER--GLY-2036 DEL; 507-TYR--GLY-2036 DEL; 640-GLU--GLY-2036 DEL; 919-GLN--GLY-2036 DEL; TRP-1169; 1320-ARG--GLY-2036 DEL AND PRO-1970</scope>
</reference>
<keyword id="KW-0007">Acetylation</keyword>
<keyword id="KW-0025">Alternative splicing</keyword>
<keyword id="KW-0225">Disease variant</keyword>
<keyword id="KW-0991">Intellectual disability</keyword>
<keyword id="KW-0539">Nucleus</keyword>
<keyword id="KW-0597">Phosphoprotein</keyword>
<keyword id="KW-1267">Proteomics identification</keyword>
<keyword id="KW-1185">Reference proteome</keyword>
<keyword id="KW-0770">Synapse</keyword>
<keyword id="KW-0771">Synaptosome</keyword>
<organism>
    <name type="scientific">Homo sapiens</name>
    <name type="common">Human</name>
    <dbReference type="NCBI Taxonomy" id="9606"/>
    <lineage>
        <taxon>Eukaryota</taxon>
        <taxon>Metazoa</taxon>
        <taxon>Chordata</taxon>
        <taxon>Craniata</taxon>
        <taxon>Vertebrata</taxon>
        <taxon>Euteleostomi</taxon>
        <taxon>Mammalia</taxon>
        <taxon>Eutheria</taxon>
        <taxon>Euarchontoglires</taxon>
        <taxon>Primates</taxon>
        <taxon>Haplorrhini</taxon>
        <taxon>Catarrhini</taxon>
        <taxon>Hominidae</taxon>
        <taxon>Homo</taxon>
    </lineage>
</organism>
<evidence type="ECO:0000250" key="1">
    <source>
        <dbReference type="UniProtKB" id="E9PYL2"/>
    </source>
</evidence>
<evidence type="ECO:0000256" key="2">
    <source>
        <dbReference type="SAM" id="MobiDB-lite"/>
    </source>
</evidence>
<evidence type="ECO:0000269" key="3">
    <source>
    </source>
</evidence>
<evidence type="ECO:0000269" key="4">
    <source>
    </source>
</evidence>
<evidence type="ECO:0000269" key="5">
    <source>
    </source>
</evidence>
<evidence type="ECO:0000303" key="6">
    <source>
    </source>
</evidence>
<evidence type="ECO:0000305" key="7"/>
<evidence type="ECO:0000312" key="8">
    <source>
        <dbReference type="HGNC" id="HGNC:29217"/>
    </source>
</evidence>
<evidence type="ECO:0007744" key="9">
    <source>
    </source>
</evidence>
<evidence type="ECO:0007744" key="10">
    <source>
    </source>
</evidence>
<evidence type="ECO:0007744" key="11">
    <source>
    </source>
</evidence>
<evidence type="ECO:0007744" key="12">
    <source>
    </source>
</evidence>
<evidence type="ECO:0007744" key="13">
    <source>
    </source>
</evidence>
<evidence type="ECO:0007744" key="14">
    <source>
    </source>
</evidence>
<evidence type="ECO:0007744" key="15">
    <source>
    </source>
</evidence>
<evidence type="ECO:0007744" key="16">
    <source>
    </source>
</evidence>
<evidence type="ECO:0007744" key="17">
    <source>
    </source>
</evidence>
<proteinExistence type="evidence at protein level"/>
<comment type="subcellular location">
    <subcellularLocation>
        <location evidence="1">Nucleus</location>
    </subcellularLocation>
    <subcellularLocation>
        <location evidence="1">Postsynaptic density</location>
    </subcellularLocation>
    <subcellularLocation>
        <location evidence="1">Synapse</location>
        <location evidence="1">Synaptosome</location>
    </subcellularLocation>
</comment>
<comment type="alternative products">
    <event type="alternative splicing"/>
    <isoform>
        <id>Q9ULL5-3</id>
        <name>1</name>
        <sequence type="displayed"/>
    </isoform>
    <isoform>
        <id>Q9ULL5-2</id>
        <name>2</name>
        <sequence type="described" ref="VSP_019503"/>
    </isoform>
</comment>
<comment type="disease" evidence="3 4 5">
    <disease id="DI-06229">
        <name>Neuroocular syndrome 1</name>
        <acronym>NOC1</acronym>
        <description>An autosomal dominant form of neuroocular syndrome, a group of disorders characterized by developmental delay, impaired intellectual development and ocular anomalies as primary findings. Variable eye abnormalities include anophthalmia, microphthalmia, and coloboma. Other common features include congenital heart and kidney defects, hypotonia, failure to thrive, and microcephaly.</description>
        <dbReference type="MIM" id="619539"/>
    </disease>
    <text>The disease is caused by variants affecting the gene represented in this entry.</text>
</comment>
<comment type="sequence caution" evidence="7">
    <conflict type="miscellaneous discrepancy">
        <sequence resource="EMBL-CDS" id="BAA86519"/>
    </conflict>
    <text>Aberrant splicing.</text>
</comment>
<feature type="chain" id="PRO_0000243945" description="Proline-rich protein 12">
    <location>
        <begin position="1"/>
        <end position="2036"/>
    </location>
</feature>
<feature type="region of interest" description="Disordered" evidence="2">
    <location>
        <begin position="210"/>
        <end position="283"/>
    </location>
</feature>
<feature type="region of interest" description="Disordered" evidence="2">
    <location>
        <begin position="331"/>
        <end position="587"/>
    </location>
</feature>
<feature type="region of interest" description="Disordered" evidence="2">
    <location>
        <begin position="649"/>
        <end position="697"/>
    </location>
</feature>
<feature type="region of interest" description="Disordered" evidence="2">
    <location>
        <begin position="758"/>
        <end position="850"/>
    </location>
</feature>
<feature type="region of interest" description="Disordered" evidence="2">
    <location>
        <begin position="859"/>
        <end position="878"/>
    </location>
</feature>
<feature type="region of interest" description="Disordered" evidence="2">
    <location>
        <begin position="886"/>
        <end position="925"/>
    </location>
</feature>
<feature type="region of interest" description="Disordered" evidence="2">
    <location>
        <begin position="952"/>
        <end position="1068"/>
    </location>
</feature>
<feature type="region of interest" description="Disordered" evidence="2">
    <location>
        <begin position="1120"/>
        <end position="1260"/>
    </location>
</feature>
<feature type="region of interest" description="Disordered" evidence="2">
    <location>
        <begin position="1294"/>
        <end position="1347"/>
    </location>
</feature>
<feature type="region of interest" description="Disordered" evidence="2">
    <location>
        <begin position="1376"/>
        <end position="1573"/>
    </location>
</feature>
<feature type="region of interest" description="Disordered" evidence="2">
    <location>
        <begin position="1668"/>
        <end position="1840"/>
    </location>
</feature>
<feature type="compositionally biased region" description="Pro residues" evidence="2">
    <location>
        <begin position="223"/>
        <end position="240"/>
    </location>
</feature>
<feature type="compositionally biased region" description="Low complexity" evidence="2">
    <location>
        <begin position="249"/>
        <end position="258"/>
    </location>
</feature>
<feature type="compositionally biased region" description="Low complexity" evidence="2">
    <location>
        <begin position="340"/>
        <end position="365"/>
    </location>
</feature>
<feature type="compositionally biased region" description="Gly residues" evidence="2">
    <location>
        <begin position="367"/>
        <end position="380"/>
    </location>
</feature>
<feature type="compositionally biased region" description="Gly residues" evidence="2">
    <location>
        <begin position="391"/>
        <end position="400"/>
    </location>
</feature>
<feature type="compositionally biased region" description="Low complexity" evidence="2">
    <location>
        <begin position="411"/>
        <end position="432"/>
    </location>
</feature>
<feature type="compositionally biased region" description="Low complexity" evidence="2">
    <location>
        <begin position="441"/>
        <end position="458"/>
    </location>
</feature>
<feature type="compositionally biased region" description="Pro residues" evidence="2">
    <location>
        <begin position="479"/>
        <end position="490"/>
    </location>
</feature>
<feature type="compositionally biased region" description="Polar residues" evidence="2">
    <location>
        <begin position="493"/>
        <end position="504"/>
    </location>
</feature>
<feature type="compositionally biased region" description="Polar residues" evidence="2">
    <location>
        <begin position="523"/>
        <end position="537"/>
    </location>
</feature>
<feature type="compositionally biased region" description="Gly residues" evidence="2">
    <location>
        <begin position="543"/>
        <end position="558"/>
    </location>
</feature>
<feature type="compositionally biased region" description="Gly residues" evidence="2">
    <location>
        <begin position="673"/>
        <end position="683"/>
    </location>
</feature>
<feature type="compositionally biased region" description="Low complexity" evidence="2">
    <location>
        <begin position="802"/>
        <end position="817"/>
    </location>
</feature>
<feature type="compositionally biased region" description="Pro residues" evidence="2">
    <location>
        <begin position="833"/>
        <end position="847"/>
    </location>
</feature>
<feature type="compositionally biased region" description="Pro residues" evidence="2">
    <location>
        <begin position="1037"/>
        <end position="1052"/>
    </location>
</feature>
<feature type="compositionally biased region" description="Low complexity" evidence="2">
    <location>
        <begin position="1182"/>
        <end position="1194"/>
    </location>
</feature>
<feature type="compositionally biased region" description="Basic residues" evidence="2">
    <location>
        <begin position="1199"/>
        <end position="1208"/>
    </location>
</feature>
<feature type="compositionally biased region" description="Basic and acidic residues" evidence="2">
    <location>
        <begin position="1209"/>
        <end position="1223"/>
    </location>
</feature>
<feature type="compositionally biased region" description="Polar residues" evidence="2">
    <location>
        <begin position="1239"/>
        <end position="1257"/>
    </location>
</feature>
<feature type="compositionally biased region" description="Pro residues" evidence="2">
    <location>
        <begin position="1306"/>
        <end position="1317"/>
    </location>
</feature>
<feature type="compositionally biased region" description="Pro residues" evidence="2">
    <location>
        <begin position="1324"/>
        <end position="1338"/>
    </location>
</feature>
<feature type="compositionally biased region" description="Pro residues" evidence="2">
    <location>
        <begin position="1420"/>
        <end position="1438"/>
    </location>
</feature>
<feature type="compositionally biased region" description="Pro residues" evidence="2">
    <location>
        <begin position="1458"/>
        <end position="1535"/>
    </location>
</feature>
<feature type="compositionally biased region" description="Basic and acidic residues" evidence="2">
    <location>
        <begin position="1541"/>
        <end position="1553"/>
    </location>
</feature>
<feature type="compositionally biased region" description="Pro residues" evidence="2">
    <location>
        <begin position="1691"/>
        <end position="1703"/>
    </location>
</feature>
<feature type="compositionally biased region" description="Basic and acidic residues" evidence="2">
    <location>
        <begin position="1704"/>
        <end position="1715"/>
    </location>
</feature>
<feature type="compositionally biased region" description="Basic and acidic residues" evidence="2">
    <location>
        <begin position="1737"/>
        <end position="1769"/>
    </location>
</feature>
<feature type="compositionally biased region" description="Low complexity" evidence="2">
    <location>
        <begin position="1817"/>
        <end position="1829"/>
    </location>
</feature>
<feature type="modified residue" description="Phosphoserine" evidence="1">
    <location>
        <position position="332"/>
    </location>
</feature>
<feature type="modified residue" description="Phosphoserine" evidence="1">
    <location>
        <position position="340"/>
    </location>
</feature>
<feature type="modified residue" description="Phosphoserine" evidence="15">
    <location>
        <position position="651"/>
    </location>
</feature>
<feature type="modified residue" description="Phosphothreonine" evidence="15">
    <location>
        <position position="738"/>
    </location>
</feature>
<feature type="modified residue" description="Phosphoserine" evidence="10 14 16">
    <location>
        <position position="865"/>
    </location>
</feature>
<feature type="modified residue" description="Phosphoserine" evidence="11 16">
    <location>
        <position position="1077"/>
    </location>
</feature>
<feature type="modified residue" description="Phosphoserine" evidence="1">
    <location>
        <position position="1135"/>
    </location>
</feature>
<feature type="modified residue" description="N6-acetyllysine" evidence="12">
    <location>
        <position position="1223"/>
    </location>
</feature>
<feature type="modified residue" description="Phosphothreonine" evidence="11 14">
    <location>
        <position position="1304"/>
    </location>
</feature>
<feature type="modified residue" description="Phosphoserine" evidence="9 11 14 16 17">
    <location>
        <position position="1308"/>
    </location>
</feature>
<feature type="modified residue" description="Phosphoserine" evidence="11 13 14 15 16">
    <location>
        <position position="1381"/>
    </location>
</feature>
<feature type="modified residue" description="Phosphoserine" evidence="11 13 14 15 16">
    <location>
        <position position="1382"/>
    </location>
</feature>
<feature type="modified residue" description="Phosphoserine" evidence="14 15">
    <location>
        <position position="1387"/>
    </location>
</feature>
<feature type="modified residue" description="Phosphothreonine" evidence="9 11">
    <location>
        <position position="1561"/>
    </location>
</feature>
<feature type="modified residue" description="Phosphoserine" evidence="9 11">
    <location>
        <position position="1568"/>
    </location>
</feature>
<feature type="modified residue" description="Phosphothreonine" evidence="16">
    <location>
        <position position="1705"/>
    </location>
</feature>
<feature type="modified residue" description="Phosphoserine" evidence="10 14">
    <location>
        <position position="1925"/>
    </location>
</feature>
<feature type="splice variant" id="VSP_019503" description="In isoform 2." evidence="6">
    <location>
        <begin position="1875"/>
        <end position="1946"/>
    </location>
</feature>
<feature type="sequence variant" id="VAR_086258" description="In NOC1." evidence="5">
    <location>
        <begin position="264"/>
        <end position="2036"/>
    </location>
</feature>
<feature type="sequence variant" id="VAR_086259" description="In NOC1." evidence="5">
    <location>
        <begin position="411"/>
        <end position="2036"/>
    </location>
</feature>
<feature type="sequence variant" id="VAR_086260" description="In NOC1." evidence="5">
    <location>
        <begin position="507"/>
        <end position="2036"/>
    </location>
</feature>
<feature type="sequence variant" id="VAR_086261" description="In NOC1; dbSNP:rs1555740650." evidence="3 5">
    <location>
        <begin position="640"/>
        <end position="2036"/>
    </location>
</feature>
<feature type="sequence variant" id="VAR_086262" description="In NOC1." evidence="5">
    <location>
        <begin position="919"/>
        <end position="2036"/>
    </location>
</feature>
<feature type="sequence variant" id="VAR_086263" description="In NOC1; dbSNP:rs1435355373." evidence="5">
    <original>R</original>
    <variation>W</variation>
    <location>
        <position position="1169"/>
    </location>
</feature>
<feature type="sequence variant" id="VAR_086264" description="In NOC1." evidence="5">
    <location>
        <begin position="1320"/>
        <end position="2036"/>
    </location>
</feature>
<feature type="sequence variant" id="VAR_086265" description="In NOC1; dbSNP:rs2122390232." evidence="5">
    <original>L</original>
    <variation>P</variation>
    <location>
        <position position="1970"/>
    </location>
</feature>
<sequence>MDRNYPSAGFGDPLGAGAGWSYERSAKASLVYGSSRTSHPETDILHRQAYAAPHPLQSYATNHHPAGLSGLFDTGLHHAGSAGPDASVMNLISALESRGPQPGPSASSLLSQFRSPSWQTAMHTPGPTELFISGALPGSSTFPSSSALSAYQHPASFGSRPFPVPSSLSLQDPPFSPPANGLLSPHDVLHLKPSQAPTVPSSLGFERLAGGGVLGPAGLGPAQTPPYRPGPPDPPPPPRHLPTQFNLLASSSAAAAAAEQSSPQLYNFSGAAPGPPPPERALPRQDTVIKHYQRPASAQPPPPPPPAHALQHYLSCGGSYPSMGHRANLACSPLGGGEPSPGAGEPSKAGPSGATAGASGRATGPEAAGGGGAGGGGGGYRPIIQSPGYKTGKGGYGAAAGGATRPPPPRSTATPKCQSLGGPAAAYATGKASGAGGAGGQAYSPGQPQGLLGPQAYGQGFGGGQAQDLSKAPSYSGGPPQPPSGPPPPGLATCQSYSPDQLQGQLYGVQGEPYPGPAAHSQGLPTASPSLSYSTGHSPALSGHGGGWGPSSLGGGGEASPSHIIRPLQSPPATGRPPGVGSPGAPGKYLSSVLASAPFLAPPGAGSYAAGAGGYKGKGDGSELLAGPGGPPAERTEDEEFLIQHLLQAPSPPRTSGADGLVGEDGAADASKGLGGSGGAGGPPGTPYELAKEDPQRYHLQSVIRTSASLDEGATAALELGLGRLKEKKKGPERGGETPEGLATSVVHYGAGAKELGAFLQKSPPPPPPTAQSTQPTPHGLLLEAGGPDLPLVLPPPPPQLLPSVLSHAPSPSPSASKVGVHLLEPATRDGAPQPPPPPPPPPPPMPLQLEAHLRSHGLEPAAPSPRLRPEESLDPPGAMQELLGALEPLPPAPGDTGVGPPNSEGKDPAGAYRSPSPQGTKAPRFVPLTSICFPDSLLQDEERSFFPTMEEMFGGGAADDYGKAGPPEDEGDPKAGAGPPPGPPAYDPYGPYCPGRASGAGPETPGLGLDPNKPPELPSTVNAEPLGLIQSGPHQAAPPPPPPPPPPPAPASEPKGGLTSPIFCSTKPKKLLKTSSFHLLRRRDPPFQTPKKLYAQEYEFEADEDKADVPADIRLNPRRLPDLVSSCRSRPALSPLGDIDFCPPNPGPDGPRRRGRKPTKAKRDGPPRPRGRPRIRPLEVPTTAGPASASTPTDGAKKPRGRGRGRGRKAEEAGGTRLEPLKPLKIKLSVPKAGEGLGTSSGDAISGTDHNSLDSSLTREKIEAKIKEVEEKQPEMKSGFMASFLDFLKSGKRHPPLYQAGLTPPLSPPKSVPPSVPARGLQPQPPATPAVPHPPPSGAFGLGGALEAAESEGLGLGCPSPCKRLDEELKRNLETLPSFSSDEEDSVAKNRDLQESISSAISALDDPPLAGPKDTSTPDGPPLAPAAAVPGPPPLPGLPSANSNGTPEPPLLEEKPPPTPPPAPTPQPQPPPPPPPPQPALPSPPPLVAPTPSSPPPPPLPPPPPPAMPSPPPPPPPAAAPLAAPPEEPAAPSPEDPELPDTRPLHLAKKQETAAVCGETDEEAGESGGEGIFRERDEFVIRAEDIPSLKLALQTGREPPPIWRVQKALLQKFTPEIKDGQRQFCATSNYLGYFGDAKNRYQRLYVKFLENVNKKDYVRVCARKPWHRPPVPVRRSGQAKNPVSAGGSSAPPPKAPAPPPKPETPEKTTSEKPPEQTPETAMPEPPAPEKPSLLRPVEKEKEKEKVTRGERPLRGERATSGRQTRPERSLATGQPATSRLPKARPTKVKAEPPPKKRKKWLKEAGGNATAGGGPPGSSSDSESSPGAPSEDERAVPGRLLKTRAMREMYRSYVEMLVSTALDPDMIQALEDTHDELYLPPMRKIDGLLNEHKKKVLKRLSLSPALQDALHTFPQLQVEQSGEGSPEEGAVRLRPAGEPYNRKTLSKLKRSVVRAQEFKVELEKSGYYTLYHSLHHYKYHTFLRCRDQTLAIEGGAEDLGQEEVVQQCMRNQPWLEQLFDSFSDLLAQAQAHSRCG</sequence>
<gene>
    <name evidence="8" type="primary">PRR12</name>
    <name type="synonym">KIAA1205</name>
</gene>